<protein>
    <recommendedName>
        <fullName evidence="1">Transcriptional regulator SlyA</fullName>
    </recommendedName>
</protein>
<dbReference type="EMBL" id="AE014075">
    <property type="protein sequence ID" value="AAN80494.1"/>
    <property type="status" value="ALT_INIT"/>
    <property type="molecule type" value="Genomic_DNA"/>
</dbReference>
<dbReference type="RefSeq" id="WP_000445640.1">
    <property type="nucleotide sequence ID" value="NZ_CP051263.1"/>
</dbReference>
<dbReference type="SMR" id="P0A4U4"/>
<dbReference type="STRING" id="199310.c2034"/>
<dbReference type="KEGG" id="ecc:c2034"/>
<dbReference type="eggNOG" id="COG1846">
    <property type="taxonomic scope" value="Bacteria"/>
</dbReference>
<dbReference type="HOGENOM" id="CLU_083287_18_2_6"/>
<dbReference type="Proteomes" id="UP000001410">
    <property type="component" value="Chromosome"/>
</dbReference>
<dbReference type="GO" id="GO:0003677">
    <property type="term" value="F:DNA binding"/>
    <property type="evidence" value="ECO:0007669"/>
    <property type="project" value="UniProtKB-UniRule"/>
</dbReference>
<dbReference type="GO" id="GO:0003700">
    <property type="term" value="F:DNA-binding transcription factor activity"/>
    <property type="evidence" value="ECO:0007669"/>
    <property type="project" value="UniProtKB-UniRule"/>
</dbReference>
<dbReference type="GO" id="GO:0006950">
    <property type="term" value="P:response to stress"/>
    <property type="evidence" value="ECO:0007669"/>
    <property type="project" value="TreeGrafter"/>
</dbReference>
<dbReference type="FunFam" id="1.10.10.10:FF:000261">
    <property type="entry name" value="Transcriptional regulator SlyA"/>
    <property type="match status" value="1"/>
</dbReference>
<dbReference type="Gene3D" id="1.10.10.10">
    <property type="entry name" value="Winged helix-like DNA-binding domain superfamily/Winged helix DNA-binding domain"/>
    <property type="match status" value="1"/>
</dbReference>
<dbReference type="HAMAP" id="MF_01819">
    <property type="entry name" value="HTH_type_SlyA"/>
    <property type="match status" value="1"/>
</dbReference>
<dbReference type="InterPro" id="IPR000835">
    <property type="entry name" value="HTH_MarR-typ"/>
</dbReference>
<dbReference type="InterPro" id="IPR039422">
    <property type="entry name" value="MarR/SlyA-like"/>
</dbReference>
<dbReference type="InterPro" id="IPR023187">
    <property type="entry name" value="Tscrpt_reg_MarR-type_CS"/>
</dbReference>
<dbReference type="InterPro" id="IPR023071">
    <property type="entry name" value="Tscrpt_reg_SlyA"/>
</dbReference>
<dbReference type="InterPro" id="IPR036388">
    <property type="entry name" value="WH-like_DNA-bd_sf"/>
</dbReference>
<dbReference type="InterPro" id="IPR036390">
    <property type="entry name" value="WH_DNA-bd_sf"/>
</dbReference>
<dbReference type="NCBIfam" id="NF002926">
    <property type="entry name" value="PRK03573.1"/>
    <property type="match status" value="1"/>
</dbReference>
<dbReference type="PANTHER" id="PTHR33164:SF64">
    <property type="entry name" value="TRANSCRIPTIONAL REGULATOR SLYA"/>
    <property type="match status" value="1"/>
</dbReference>
<dbReference type="PANTHER" id="PTHR33164">
    <property type="entry name" value="TRANSCRIPTIONAL REGULATOR, MARR FAMILY"/>
    <property type="match status" value="1"/>
</dbReference>
<dbReference type="Pfam" id="PF01047">
    <property type="entry name" value="MarR"/>
    <property type="match status" value="1"/>
</dbReference>
<dbReference type="PRINTS" id="PR00598">
    <property type="entry name" value="HTHMARR"/>
</dbReference>
<dbReference type="SMART" id="SM00347">
    <property type="entry name" value="HTH_MARR"/>
    <property type="match status" value="1"/>
</dbReference>
<dbReference type="SUPFAM" id="SSF46785">
    <property type="entry name" value="Winged helix' DNA-binding domain"/>
    <property type="match status" value="1"/>
</dbReference>
<dbReference type="PROSITE" id="PS01117">
    <property type="entry name" value="HTH_MARR_1"/>
    <property type="match status" value="1"/>
</dbReference>
<dbReference type="PROSITE" id="PS50995">
    <property type="entry name" value="HTH_MARR_2"/>
    <property type="match status" value="1"/>
</dbReference>
<proteinExistence type="inferred from homology"/>
<keyword id="KW-0010">Activator</keyword>
<keyword id="KW-0238">DNA-binding</keyword>
<keyword id="KW-1185">Reference proteome</keyword>
<keyword id="KW-0678">Repressor</keyword>
<keyword id="KW-0804">Transcription</keyword>
<keyword id="KW-0805">Transcription regulation</keyword>
<name>SLYA_ECOL6</name>
<reference key="1">
    <citation type="journal article" date="2002" name="Proc. Natl. Acad. Sci. U.S.A.">
        <title>Extensive mosaic structure revealed by the complete genome sequence of uropathogenic Escherichia coli.</title>
        <authorList>
            <person name="Welch R.A."/>
            <person name="Burland V."/>
            <person name="Plunkett G. III"/>
            <person name="Redford P."/>
            <person name="Roesch P."/>
            <person name="Rasko D."/>
            <person name="Buckles E.L."/>
            <person name="Liou S.-R."/>
            <person name="Boutin A."/>
            <person name="Hackett J."/>
            <person name="Stroud D."/>
            <person name="Mayhew G.F."/>
            <person name="Rose D.J."/>
            <person name="Zhou S."/>
            <person name="Schwartz D.C."/>
            <person name="Perna N.T."/>
            <person name="Mobley H.L.T."/>
            <person name="Donnenberg M.S."/>
            <person name="Blattner F.R."/>
        </authorList>
    </citation>
    <scope>NUCLEOTIDE SEQUENCE [LARGE SCALE GENOMIC DNA]</scope>
    <source>
        <strain>CFT073 / ATCC 700928 / UPEC</strain>
    </source>
</reference>
<evidence type="ECO:0000255" key="1">
    <source>
        <dbReference type="HAMAP-Rule" id="MF_01819"/>
    </source>
</evidence>
<evidence type="ECO:0000305" key="2"/>
<feature type="chain" id="PRO_0000054386" description="Transcriptional regulator SlyA">
    <location>
        <begin position="1"/>
        <end position="144"/>
    </location>
</feature>
<feature type="domain" description="HTH marR-type" evidence="1">
    <location>
        <begin position="2"/>
        <end position="135"/>
    </location>
</feature>
<feature type="DNA-binding region" description="H-T-H motif" evidence="1">
    <location>
        <begin position="49"/>
        <end position="72"/>
    </location>
</feature>
<sequence>MESPLGSDLARLVRIWRALIDHRLKPLELTQTHWVTLHNIHQLPPDQSQIQLAKAIGIEQPSLVRTLDQLEEKGLISRQTCASDRRAKRIKLTEKAEPLISEMEAVINKTRAEILHGISAEELEQLIKLIAKLEHNIIELQAKG</sequence>
<comment type="function">
    <text evidence="1">Transcription regulator that can specifically activate or repress expression of target genes.</text>
</comment>
<comment type="subunit">
    <text evidence="1">Homodimer.</text>
</comment>
<comment type="similarity">
    <text evidence="1">Belongs to the SlyA family.</text>
</comment>
<comment type="sequence caution" evidence="2">
    <conflict type="erroneous initiation">
        <sequence resource="EMBL-CDS" id="AAN80494"/>
    </conflict>
    <text>Extended N-terminus.</text>
</comment>
<accession>P0A4U4</accession>
<accession>Q8FH84</accession>
<accession>Q93M77</accession>
<gene>
    <name evidence="1" type="primary">slyA</name>
    <name type="ordered locus">c2034</name>
</gene>
<organism>
    <name type="scientific">Escherichia coli O6:H1 (strain CFT073 / ATCC 700928 / UPEC)</name>
    <dbReference type="NCBI Taxonomy" id="199310"/>
    <lineage>
        <taxon>Bacteria</taxon>
        <taxon>Pseudomonadati</taxon>
        <taxon>Pseudomonadota</taxon>
        <taxon>Gammaproteobacteria</taxon>
        <taxon>Enterobacterales</taxon>
        <taxon>Enterobacteriaceae</taxon>
        <taxon>Escherichia</taxon>
    </lineage>
</organism>